<organism>
    <name type="scientific">Salmonella typhimurium (strain LT2 / SGSC1412 / ATCC 700720)</name>
    <dbReference type="NCBI Taxonomy" id="99287"/>
    <lineage>
        <taxon>Bacteria</taxon>
        <taxon>Pseudomonadati</taxon>
        <taxon>Pseudomonadota</taxon>
        <taxon>Gammaproteobacteria</taxon>
        <taxon>Enterobacterales</taxon>
        <taxon>Enterobacteriaceae</taxon>
        <taxon>Salmonella</taxon>
    </lineage>
</organism>
<name>UPPP_SALTY</name>
<accession>P67388</accession>
<accession>Q8Z3M8</accession>
<accession>Q8ZLY3</accession>
<sequence>MSDMHSLLIAAILGVVEGLTEFLPVSSTGHMIIVGHLLGFEGDTAKTFEVVIQLGSILAVVVMFWRRLFGLIGIHFGRPLQREGESKGRLTLIHILLGMIPAVVLGLVFHDTIKSLFNPINVMYALVVGGLLLIAAECLKPKEPRAPGLDDMTYRQAFMIGCFQCLALWPGFSRSGATISGGMLMGVSRYAASEFSFLLAVPMMMGATVLDLYKSWSFLTAADIPMFAVGFVTAFVVALIAIKTFLQLIKRISFIPFAIYRFVVAAAVYVVFF</sequence>
<keyword id="KW-0046">Antibiotic resistance</keyword>
<keyword id="KW-0997">Cell inner membrane</keyword>
<keyword id="KW-1003">Cell membrane</keyword>
<keyword id="KW-0133">Cell shape</keyword>
<keyword id="KW-0961">Cell wall biogenesis/degradation</keyword>
<keyword id="KW-0378">Hydrolase</keyword>
<keyword id="KW-0472">Membrane</keyword>
<keyword id="KW-0573">Peptidoglycan synthesis</keyword>
<keyword id="KW-1185">Reference proteome</keyword>
<keyword id="KW-0812">Transmembrane</keyword>
<keyword id="KW-1133">Transmembrane helix</keyword>
<gene>
    <name evidence="1" type="primary">uppP</name>
    <name type="synonym">bacA</name>
    <name type="synonym">upk</name>
    <name type="ordered locus">STM3205</name>
</gene>
<proteinExistence type="inferred from homology"/>
<evidence type="ECO:0000255" key="1">
    <source>
        <dbReference type="HAMAP-Rule" id="MF_01006"/>
    </source>
</evidence>
<evidence type="ECO:0000305" key="2"/>
<protein>
    <recommendedName>
        <fullName evidence="1">Undecaprenyl-diphosphatase</fullName>
        <ecNumber evidence="1">3.6.1.27</ecNumber>
    </recommendedName>
    <alternativeName>
        <fullName evidence="1">Bacitracin resistance protein</fullName>
    </alternativeName>
    <alternativeName>
        <fullName evidence="1">Undecaprenyl pyrophosphate phosphatase</fullName>
    </alternativeName>
</protein>
<reference key="1">
    <citation type="journal article" date="2001" name="Nature">
        <title>Complete genome sequence of Salmonella enterica serovar Typhimurium LT2.</title>
        <authorList>
            <person name="McClelland M."/>
            <person name="Sanderson K.E."/>
            <person name="Spieth J."/>
            <person name="Clifton S.W."/>
            <person name="Latreille P."/>
            <person name="Courtney L."/>
            <person name="Porwollik S."/>
            <person name="Ali J."/>
            <person name="Dante M."/>
            <person name="Du F."/>
            <person name="Hou S."/>
            <person name="Layman D."/>
            <person name="Leonard S."/>
            <person name="Nguyen C."/>
            <person name="Scott K."/>
            <person name="Holmes A."/>
            <person name="Grewal N."/>
            <person name="Mulvaney E."/>
            <person name="Ryan E."/>
            <person name="Sun H."/>
            <person name="Florea L."/>
            <person name="Miller W."/>
            <person name="Stoneking T."/>
            <person name="Nhan M."/>
            <person name="Waterston R."/>
            <person name="Wilson R.K."/>
        </authorList>
    </citation>
    <scope>NUCLEOTIDE SEQUENCE [LARGE SCALE GENOMIC DNA]</scope>
    <source>
        <strain>LT2 / SGSC1412 / ATCC 700720</strain>
    </source>
</reference>
<dbReference type="EC" id="3.6.1.27" evidence="1"/>
<dbReference type="EMBL" id="AE006468">
    <property type="protein sequence ID" value="AAL22079.1"/>
    <property type="status" value="ALT_INIT"/>
    <property type="molecule type" value="Genomic_DNA"/>
</dbReference>
<dbReference type="RefSeq" id="NP_462120.3">
    <property type="nucleotide sequence ID" value="NC_003197.2"/>
</dbReference>
<dbReference type="RefSeq" id="WP_001576369.1">
    <property type="nucleotide sequence ID" value="NC_003197.2"/>
</dbReference>
<dbReference type="SMR" id="P67388"/>
<dbReference type="STRING" id="99287.STM3205"/>
<dbReference type="PaxDb" id="99287-STM3205"/>
<dbReference type="GeneID" id="1254728"/>
<dbReference type="KEGG" id="stm:STM3205"/>
<dbReference type="PATRIC" id="fig|99287.12.peg.3400"/>
<dbReference type="HOGENOM" id="CLU_060296_2_0_6"/>
<dbReference type="OMA" id="AWYRIVF"/>
<dbReference type="PhylomeDB" id="P67388"/>
<dbReference type="Proteomes" id="UP000001014">
    <property type="component" value="Chromosome"/>
</dbReference>
<dbReference type="GO" id="GO:0005886">
    <property type="term" value="C:plasma membrane"/>
    <property type="evidence" value="ECO:0000318"/>
    <property type="project" value="GO_Central"/>
</dbReference>
<dbReference type="GO" id="GO:0050380">
    <property type="term" value="F:undecaprenyl-diphosphatase activity"/>
    <property type="evidence" value="ECO:0000318"/>
    <property type="project" value="GO_Central"/>
</dbReference>
<dbReference type="GO" id="GO:0071555">
    <property type="term" value="P:cell wall organization"/>
    <property type="evidence" value="ECO:0007669"/>
    <property type="project" value="UniProtKB-KW"/>
</dbReference>
<dbReference type="GO" id="GO:0009252">
    <property type="term" value="P:peptidoglycan biosynthetic process"/>
    <property type="evidence" value="ECO:0007669"/>
    <property type="project" value="UniProtKB-KW"/>
</dbReference>
<dbReference type="GO" id="GO:0000270">
    <property type="term" value="P:peptidoglycan metabolic process"/>
    <property type="evidence" value="ECO:0000318"/>
    <property type="project" value="GO_Central"/>
</dbReference>
<dbReference type="GO" id="GO:0008360">
    <property type="term" value="P:regulation of cell shape"/>
    <property type="evidence" value="ECO:0007669"/>
    <property type="project" value="UniProtKB-KW"/>
</dbReference>
<dbReference type="GO" id="GO:0046677">
    <property type="term" value="P:response to antibiotic"/>
    <property type="evidence" value="ECO:0007669"/>
    <property type="project" value="UniProtKB-UniRule"/>
</dbReference>
<dbReference type="HAMAP" id="MF_01006">
    <property type="entry name" value="Undec_diphosphatase"/>
    <property type="match status" value="1"/>
</dbReference>
<dbReference type="InterPro" id="IPR003824">
    <property type="entry name" value="UppP"/>
</dbReference>
<dbReference type="NCBIfam" id="NF001388">
    <property type="entry name" value="PRK00281.1-1"/>
    <property type="match status" value="1"/>
</dbReference>
<dbReference type="NCBIfam" id="NF001389">
    <property type="entry name" value="PRK00281.1-2"/>
    <property type="match status" value="1"/>
</dbReference>
<dbReference type="NCBIfam" id="NF001390">
    <property type="entry name" value="PRK00281.1-4"/>
    <property type="match status" value="1"/>
</dbReference>
<dbReference type="NCBIfam" id="TIGR00753">
    <property type="entry name" value="undec_PP_bacA"/>
    <property type="match status" value="1"/>
</dbReference>
<dbReference type="PANTHER" id="PTHR30622">
    <property type="entry name" value="UNDECAPRENYL-DIPHOSPHATASE"/>
    <property type="match status" value="1"/>
</dbReference>
<dbReference type="PANTHER" id="PTHR30622:SF3">
    <property type="entry name" value="UNDECAPRENYL-DIPHOSPHATASE"/>
    <property type="match status" value="1"/>
</dbReference>
<dbReference type="Pfam" id="PF02673">
    <property type="entry name" value="BacA"/>
    <property type="match status" value="1"/>
</dbReference>
<comment type="function">
    <text evidence="1">Catalyzes the dephosphorylation of undecaprenyl diphosphate (UPP). Confers resistance to bacitracin.</text>
</comment>
<comment type="catalytic activity">
    <reaction evidence="1">
        <text>di-trans,octa-cis-undecaprenyl diphosphate + H2O = di-trans,octa-cis-undecaprenyl phosphate + phosphate + H(+)</text>
        <dbReference type="Rhea" id="RHEA:28094"/>
        <dbReference type="ChEBI" id="CHEBI:15377"/>
        <dbReference type="ChEBI" id="CHEBI:15378"/>
        <dbReference type="ChEBI" id="CHEBI:43474"/>
        <dbReference type="ChEBI" id="CHEBI:58405"/>
        <dbReference type="ChEBI" id="CHEBI:60392"/>
        <dbReference type="EC" id="3.6.1.27"/>
    </reaction>
</comment>
<comment type="subcellular location">
    <subcellularLocation>
        <location evidence="1">Cell inner membrane</location>
        <topology evidence="1">Multi-pass membrane protein</topology>
    </subcellularLocation>
</comment>
<comment type="miscellaneous">
    <text>Bacitracin is thought to be involved in the inhibition of peptidoglycan synthesis by sequestering undecaprenyl diphosphate, thereby reducing the pool of lipid carrier available.</text>
</comment>
<comment type="similarity">
    <text evidence="1">Belongs to the UppP family.</text>
</comment>
<comment type="sequence caution" evidence="2">
    <conflict type="erroneous initiation">
        <sequence resource="EMBL-CDS" id="AAL22079"/>
    </conflict>
</comment>
<feature type="chain" id="PRO_0000151193" description="Undecaprenyl-diphosphatase">
    <location>
        <begin position="1"/>
        <end position="273"/>
    </location>
</feature>
<feature type="transmembrane region" description="Helical" evidence="1">
    <location>
        <begin position="6"/>
        <end position="26"/>
    </location>
</feature>
<feature type="transmembrane region" description="Helical" evidence="1">
    <location>
        <begin position="45"/>
        <end position="65"/>
    </location>
</feature>
<feature type="transmembrane region" description="Helical" evidence="1">
    <location>
        <begin position="90"/>
        <end position="110"/>
    </location>
</feature>
<feature type="transmembrane region" description="Helical" evidence="1">
    <location>
        <begin position="116"/>
        <end position="136"/>
    </location>
</feature>
<feature type="transmembrane region" description="Helical" evidence="1">
    <location>
        <begin position="190"/>
        <end position="210"/>
    </location>
</feature>
<feature type="transmembrane region" description="Helical" evidence="1">
    <location>
        <begin position="222"/>
        <end position="242"/>
    </location>
</feature>
<feature type="transmembrane region" description="Helical" evidence="1">
    <location>
        <begin position="252"/>
        <end position="272"/>
    </location>
</feature>